<accession>O18330</accession>
<accession>C6K481</accession>
<accession>Q548D6</accession>
<keyword id="KW-0002">3D-structure</keyword>
<keyword id="KW-0027">Amidation</keyword>
<keyword id="KW-0044">Antibiotic</keyword>
<keyword id="KW-0929">Antimicrobial</keyword>
<keyword id="KW-0966">Cell projection</keyword>
<keyword id="KW-0963">Cytoplasm</keyword>
<keyword id="KW-0206">Cytoskeleton</keyword>
<keyword id="KW-0217">Developmental protein</keyword>
<keyword id="KW-0903">Direct protein sequencing</keyword>
<keyword id="KW-1015">Disulfide bond</keyword>
<keyword id="KW-0295">Fungicide</keyword>
<keyword id="KW-0325">Glycoprotein</keyword>
<keyword id="KW-1185">Reference proteome</keyword>
<keyword id="KW-0964">Secreted</keyword>
<keyword id="KW-0732">Signal</keyword>
<evidence type="ECO:0000269" key="1">
    <source>
    </source>
</evidence>
<evidence type="ECO:0000269" key="2">
    <source>
    </source>
</evidence>
<evidence type="ECO:0000269" key="3">
    <source>
    </source>
</evidence>
<evidence type="ECO:0000269" key="4">
    <source>
    </source>
</evidence>
<evidence type="ECO:0000269" key="5">
    <source>
    </source>
</evidence>
<evidence type="ECO:0000269" key="6">
    <source>
    </source>
</evidence>
<evidence type="ECO:0000269" key="7">
    <source>
    </source>
</evidence>
<evidence type="ECO:0000269" key="8">
    <source>
    </source>
</evidence>
<evidence type="ECO:0000269" key="9">
    <source>
    </source>
</evidence>
<evidence type="ECO:0000269" key="10">
    <source>
    </source>
</evidence>
<evidence type="ECO:0000269" key="11">
    <source>
    </source>
</evidence>
<evidence type="ECO:0000269" key="12">
    <source>
    </source>
</evidence>
<evidence type="ECO:0000269" key="13">
    <source>
    </source>
</evidence>
<evidence type="ECO:0000269" key="14">
    <source>
    </source>
</evidence>
<evidence type="ECO:0000269" key="15">
    <source>
    </source>
</evidence>
<evidence type="ECO:0000269" key="16">
    <source>
    </source>
</evidence>
<evidence type="ECO:0000269" key="17">
    <source>
    </source>
</evidence>
<evidence type="ECO:0000269" key="18">
    <source>
    </source>
</evidence>
<evidence type="ECO:0000269" key="19">
    <source>
    </source>
</evidence>
<evidence type="ECO:0000269" key="20">
    <source>
    </source>
</evidence>
<evidence type="ECO:0000269" key="21">
    <source>
    </source>
</evidence>
<evidence type="ECO:0000269" key="22">
    <source ref="11"/>
</evidence>
<evidence type="ECO:0000303" key="23">
    <source>
    </source>
</evidence>
<evidence type="ECO:0000303" key="24">
    <source>
    </source>
</evidence>
<evidence type="ECO:0000303" key="25">
    <source>
    </source>
</evidence>
<evidence type="ECO:0000303" key="26">
    <source>
    </source>
</evidence>
<evidence type="ECO:0000303" key="27">
    <source>
    </source>
</evidence>
<evidence type="ECO:0000303" key="28">
    <source>
    </source>
</evidence>
<evidence type="ECO:0000303" key="29">
    <source>
    </source>
</evidence>
<evidence type="ECO:0000303" key="30">
    <source>
    </source>
</evidence>
<evidence type="ECO:0000303" key="31">
    <source>
    </source>
</evidence>
<evidence type="ECO:0000305" key="32"/>
<evidence type="ECO:0000305" key="33">
    <source>
    </source>
</evidence>
<evidence type="ECO:0000305" key="34">
    <source>
    </source>
</evidence>
<evidence type="ECO:0000305" key="35">
    <source>
    </source>
</evidence>
<evidence type="ECO:0000305" key="36">
    <source>
    </source>
</evidence>
<evidence type="ECO:0000305" key="37">
    <source>
    </source>
</evidence>
<evidence type="ECO:0000305" key="38">
    <source>
    </source>
</evidence>
<evidence type="ECO:0000312" key="39">
    <source>
        <dbReference type="Proteomes" id="UP000005203"/>
    </source>
</evidence>
<evidence type="ECO:0007744" key="40">
    <source>
        <dbReference type="PDB" id="5YYL"/>
    </source>
</evidence>
<evidence type="ECO:0007744" key="41">
    <source>
        <dbReference type="PDB" id="7ASD"/>
    </source>
</evidence>
<evidence type="ECO:0007829" key="42">
    <source>
        <dbReference type="PDB" id="5YYL"/>
    </source>
</evidence>
<comment type="function">
    <molecule>Major royal jelly protein 1</molecule>
    <text evidence="4 8 9 12 16 18 21 32">Most abundant protein component of royal jelly, a substance produced in the hypopharyngeal gland containing proteins, free amino acids, fatty acids, sugars and other nutrients, which is fed to developing larvae by worker nurse bees (PubMed:15607658, PubMed:20017154, PubMed:21516106, PubMed:31410279, PubMed:9791542). Major royal jelly proteins (Mrjps) are high in essential amino acids and probably have a nutritional function in larval food (PubMed:9791542). All larvae are fed some royal jelly (also known as worker jelly) early in their development but it forms the principal source of nutrition for larvae destined to become queen bees (Probable). Induces the differentiation of honey bee larvae into queens through an Egfr-mediated signaling pathway (PubMed:21516106). Promotes body size increase by activating p70 S6 kinase, stimulates ovary development by augmenting the titer of vitellogenin (Vg) and juvenile hormone, and reduces developmental time by increasing the activity of mitogen-activated protein kinase and inducing 20-hydroxyecdysone (ecdysterone, 20E) production (PubMed:21516106). Together with apisimin forms the apisin complex that polymerizes at low pH, forming a fiber network and increasing the viscosity of royal jelly (PubMed:29551410). The viscous royal Jelly placed in honeycomb cells containing larvae destined to become queens acts as both a food supply and an adhesive preventing larvae from falling out; queens are reared in special large cells oriented vertically (PubMed:29551410). Produced in the spermatheca of adult queen bees, along with other major royal jelly proteins, where it may act as a nutrient supply for sperm stored by mated queens, or be involved in energy metabolism (PubMed:34442256).</text>
</comment>
<comment type="function">
    <molecule>Jellein-1</molecule>
    <text evidence="3">Has antibacterial activity against the Gram-positive bacteria S.aureus ATCC 6535, S.saprophyticus and B.subtilis CCT2471, and the Gram-negative bacteria E.coli CCT1371, E.cloacae ATCC 23355, K.pneumoniae ATCC 13883 and P.aeruginosa ATCC 27853, and antifungal activity against C.albicans. Lack cytolytic activity and does not induce rat peritoneal mast cell degranulation.</text>
</comment>
<comment type="function">
    <molecule>Jellein-2</molecule>
    <text evidence="3">Has antibacterial activity against the Gram-positive bacteria S.aureus ATCC 6535, S.saprophyticus and B.subtilis CCT2471, and the Gram-negative bacteria E.coli CCT1371, E.cloacae ATCC 23355, K.pneumoniae ATCC 13883 and P.aeruginosa ATCC 27853, and antifungal activity against C.albicans. Lack cytolytic activity and does not induce rat peritoneal mast cell degranulation.</text>
</comment>
<comment type="function">
    <molecule>Jellein-4</molecule>
    <text evidence="3">Lacks antibacterial and antifungal activity. Lacks cytolytic activity and does not induce rat peritoneal mast cell degranulation.</text>
</comment>
<comment type="biophysicochemical properties">
    <phDependence>
        <text evidence="15">Optimum pH for protein stability is 4.0. Protein becomes unstable at pH above 9.0.</text>
    </phDependence>
</comment>
<comment type="subunit">
    <text evidence="8 10 11 12 13 17 22 36">Is present in royal jelly in different forms: monomer (55 kDa), oligomeric subunit (ca. 287-420 kDa), and water-insoluble aggregates in sediment after interaction with fatty acids (PubMed:28252287, PubMed:30135511, Ref.11). Component of the apisin heterooligomer complex consisting of 4 copies of MRJP1 and 4 copies of apisimin, associated with 8 molecules of 24-methylenecholesterol; apisimin forms a bridge connecting two MRJP1 dimers (PubMed:20017154, PubMed:27721892, PubMed:28252287, PubMed:29551410, PubMed:30135511, PubMed:33293513). At low pH multiple apisin octamers stack to form filaments that increase the viscosity of royal jelly; these filaments may be stabilized by bound fatty acid chains (PubMed:29551410, PubMed:30135511, PubMed:33293513). The mandibular gland, where royal jelly is produced, has low pH conditions favouring filament formation, while the higher pH of the insect midgut favors filament disassembly (Probable).</text>
</comment>
<comment type="subcellular location">
    <subcellularLocation>
        <location evidence="2 3 4 5 7 8 16 19">Secreted</location>
    </subcellularLocation>
    <subcellularLocation>
        <location evidence="7">Cytoplasm</location>
    </subcellularLocation>
    <subcellularLocation>
        <location evidence="7">Cell projection</location>
        <location evidence="7">Rhabdomere</location>
    </subcellularLocation>
    <subcellularLocation>
        <location evidence="7">Cytoplasm</location>
        <location evidence="7">Cytoskeleton</location>
    </subcellularLocation>
    <text evidence="2 4 5 7 8 16 19">Incorporated into royal jelly and pollen-bread (PubMed:14709007, PubMed:15607658, PubMed:15693061, PubMed:20017154, PubMed:31410279, PubMed:9395329). Found in the cytoplasm of neuronal cells in the brain, associated with cytoskeletal-like filaments (PubMed:19203288). Also secreted into the intercellular spaces of the mushroom body (PubMed:19203288). It is unclear if this protein is found inside ommatidial rhabdomeres or is secreted into the intercellular space of the rhabdom (PubMed:19203288).</text>
</comment>
<comment type="tissue specificity">
    <text evidence="3 4 6 7 16 18 19 20">Found in and secreted from the hypopharyngeal glands of the worker honey bee (at protein level); expression peaks at 12 days post eclosion (PubMed:15203237, PubMed:15607658, PubMed:31410279, PubMed:9395329). Expressed in the brains of worker bees (at protein level); found in antennal lobe, optical lobe and a subpopulation of Kenyon cells in the mushroom body (PubMed:17065613, PubMed:19203288, PubMed:9722965). Found in the ommatidia of worker bees (at protein level) (PubMed:19203288). Expressed in the spermatheca of adult queen bees (at protein level); expression levels are higher in mated queens than in virgin queens (PubMed:34442256). Expressed in queen bee ovaries and male drone testes (PubMed:17065613).</text>
</comment>
<comment type="developmental stage">
    <text evidence="6 7 16 19 20">Expressed in the heads of worker bees, starting shortly after eclosion and continuing for 2-3 weeks; during the age-related subcaste transition from nurse worker bee to forager worker bee expression of this and other bee-milk proteins is reduced and replaced with expression of digestive proteins such as alpha-glucosidase (at protein level) (PubMed:19203288, PubMed:9395329, PubMed:9722965). Expression in the brains of worker bees peaks at 12 days post eclosion (PubMed:31410279). Expressed in larval queen bees (PubMed:17065613). Expressed in larval and pupal male drone bees (PubMed:17065613).</text>
</comment>
<comment type="induction">
    <text evidence="14">Moderately down-regulated by the ecdysteroid 20-hydroxyecdysone (ecdysterone or 20E).</text>
</comment>
<comment type="PTM">
    <text evidence="11 13 17 19">N-glycosylated on Asn-28, Asn-144 and Asn-177 (PubMed:30135511, PubMed:33293513, PubMed:9395329). Glycosylation is required to prevent apisin multimers from aggregating (PubMed:28252287).</text>
</comment>
<comment type="PTM">
    <text evidence="33">Jellein-2 is probably processed to yield jellein-1 and jellein-4.</text>
</comment>
<comment type="mass spectrometry" mass="49311.0" method="MALDI" evidence="13">
    <molecule>Major royal jelly protein 1</molecule>
</comment>
<comment type="mass spectrometry" mass="51970.0" method="Electrospray" evidence="11">
    <molecule>Major royal jelly protein 1</molecule>
</comment>
<comment type="mass spectrometry" mass="49420.0" method="MALDI" evidence="7">
    <molecule>Major royal jelly protein 1</molecule>
</comment>
<comment type="mass spectrometry" mass="953.24" error="0.17" method="Electrospray" evidence="3">
    <molecule>Jellein-1</molecule>
    <text>Jellein-1.</text>
</comment>
<comment type="mass spectrometry" mass="1054.3" error="0.18" method="Electrospray" evidence="3">
    <molecule>Jellein-2</molecule>
    <text>Jellein-2.</text>
</comment>
<comment type="mass spectrometry" mass="942.13" error="0.17" method="Electrospray" evidence="3">
    <molecule>Jellein-4</molecule>
    <text>Jellein-4.</text>
</comment>
<comment type="miscellaneous">
    <text evidence="34">Exhibits a growth factor-like action on primary-cultured rat hepatocytes by stimulating DNA synthesis and protecting cells from apoptosis induced by serum deprivation. Also activates mitogen-activated protein kinase, as well as protein kinase B, a key regulator of cell survival (PubMed:16290177).</text>
</comment>
<comment type="miscellaneous">
    <text evidence="35">Degraded proportionally to the period of storage, and is completely lost during storage at 40 degrees Celsius for 30 days.</text>
</comment>
<comment type="similarity">
    <text evidence="32">Belongs to the major royal jelly protein family.</text>
</comment>
<comment type="caution">
    <text evidence="32">Neither His-431 nor Leu-432 is followed in the nucleotide sequence by the expected Gly residue that would be required to produce amidation.</text>
</comment>
<comment type="online information" name="Protein Spotlight">
    <link uri="https://www.proteinspotlight.org/back_issues/130"/>
    <text>A queen's dinner - Issue 130 of August 2011</text>
</comment>
<dbReference type="EMBL" id="D79207">
    <property type="protein sequence ID" value="BAA23639.1"/>
    <property type="molecule type" value="mRNA"/>
</dbReference>
<dbReference type="EMBL" id="AF000633">
    <property type="protein sequence ID" value="AAC61895.1"/>
    <property type="molecule type" value="mRNA"/>
</dbReference>
<dbReference type="EMBL" id="AF388203">
    <property type="protein sequence ID" value="AAM73637.1"/>
    <property type="molecule type" value="Genomic_DNA"/>
</dbReference>
<dbReference type="EMBL" id="GQ160518">
    <property type="protein sequence ID" value="ACS66836.1"/>
    <property type="molecule type" value="mRNA"/>
</dbReference>
<dbReference type="RefSeq" id="NP_001011579.1">
    <property type="nucleotide sequence ID" value="NM_001011579.1"/>
</dbReference>
<dbReference type="PDB" id="5YYL">
    <property type="method" value="X-ray"/>
    <property type="resolution" value="2.65 A"/>
    <property type="chains" value="A/B=1-432"/>
</dbReference>
<dbReference type="PDB" id="7ASD">
    <property type="method" value="EM"/>
    <property type="resolution" value="3.50 A"/>
    <property type="chains" value="AA/BA/CA/DA/EA/FA/GA/HA=1-432"/>
</dbReference>
<dbReference type="PDBsum" id="5YYL"/>
<dbReference type="PDBsum" id="7ASD"/>
<dbReference type="EMDB" id="EMD-11892"/>
<dbReference type="SMR" id="O18330"/>
<dbReference type="STRING" id="7460.O18330"/>
<dbReference type="Allergome" id="7627">
    <property type="allergen name" value="Api m Apalbumin 1"/>
</dbReference>
<dbReference type="GlyConnect" id="2">
    <property type="glycosylation" value="4 N-Linked glycans"/>
</dbReference>
<dbReference type="GlyCosmos" id="O18330">
    <property type="glycosylation" value="3 sites, 8 glycans"/>
</dbReference>
<dbReference type="PaxDb" id="7460-GB55205-PA"/>
<dbReference type="EnsemblMetazoa" id="NM_001011579">
    <property type="protein sequence ID" value="NP_001011579"/>
    <property type="gene ID" value="GeneID_406090"/>
</dbReference>
<dbReference type="GeneID" id="406090"/>
<dbReference type="KEGG" id="ame:406090"/>
<dbReference type="CTD" id="406090"/>
<dbReference type="eggNOG" id="ENOG502SCJK">
    <property type="taxonomic scope" value="Eukaryota"/>
</dbReference>
<dbReference type="HOGENOM" id="CLU_031076_2_1_1"/>
<dbReference type="InParanoid" id="O18330"/>
<dbReference type="OMA" id="CENPDND"/>
<dbReference type="OrthoDB" id="8184345at2759"/>
<dbReference type="PhylomeDB" id="O18330"/>
<dbReference type="Proteomes" id="UP000005203">
    <property type="component" value="Linkage group LG11"/>
</dbReference>
<dbReference type="GO" id="GO:0005737">
    <property type="term" value="C:cytoplasm"/>
    <property type="evidence" value="ECO:0007669"/>
    <property type="project" value="UniProtKB-SubCell"/>
</dbReference>
<dbReference type="GO" id="GO:0005856">
    <property type="term" value="C:cytoskeleton"/>
    <property type="evidence" value="ECO:0007669"/>
    <property type="project" value="UniProtKB-SubCell"/>
</dbReference>
<dbReference type="GO" id="GO:0005576">
    <property type="term" value="C:extracellular region"/>
    <property type="evidence" value="ECO:0000314"/>
    <property type="project" value="UniProtKB"/>
</dbReference>
<dbReference type="GO" id="GO:0016028">
    <property type="term" value="C:rhabdomere"/>
    <property type="evidence" value="ECO:0007669"/>
    <property type="project" value="UniProtKB-SubCell"/>
</dbReference>
<dbReference type="GO" id="GO:0032934">
    <property type="term" value="F:sterol binding"/>
    <property type="evidence" value="ECO:0000353"/>
    <property type="project" value="UniProtKB"/>
</dbReference>
<dbReference type="GO" id="GO:0048650">
    <property type="term" value="P:caste determination, influence by environmental factors"/>
    <property type="evidence" value="ECO:0000314"/>
    <property type="project" value="UniProtKB"/>
</dbReference>
<dbReference type="GO" id="GO:0050832">
    <property type="term" value="P:defense response to fungus"/>
    <property type="evidence" value="ECO:0000314"/>
    <property type="project" value="UniProtKB"/>
</dbReference>
<dbReference type="GO" id="GO:0050829">
    <property type="term" value="P:defense response to Gram-negative bacterium"/>
    <property type="evidence" value="ECO:0000314"/>
    <property type="project" value="UniProtKB"/>
</dbReference>
<dbReference type="GO" id="GO:0050830">
    <property type="term" value="P:defense response to Gram-positive bacterium"/>
    <property type="evidence" value="ECO:0000314"/>
    <property type="project" value="UniProtKB"/>
</dbReference>
<dbReference type="GO" id="GO:0031640">
    <property type="term" value="P:killing of cells of another organism"/>
    <property type="evidence" value="ECO:0007669"/>
    <property type="project" value="UniProtKB-KW"/>
</dbReference>
<dbReference type="GO" id="GO:0022609">
    <property type="term" value="P:multicellular organism adhesion to substrate"/>
    <property type="evidence" value="ECO:0000314"/>
    <property type="project" value="UniProtKB"/>
</dbReference>
<dbReference type="FunFam" id="2.120.10.30:FF:000177">
    <property type="entry name" value="Major royal jelly protein 3"/>
    <property type="match status" value="1"/>
</dbReference>
<dbReference type="Gene3D" id="2.120.10.30">
    <property type="entry name" value="TolB, C-terminal domain"/>
    <property type="match status" value="1"/>
</dbReference>
<dbReference type="InterPro" id="IPR011042">
    <property type="entry name" value="6-blade_b-propeller_TolB-like"/>
</dbReference>
<dbReference type="InterPro" id="IPR017996">
    <property type="entry name" value="Royal_jelly/protein_yellow"/>
</dbReference>
<dbReference type="PANTHER" id="PTHR10009:SF7">
    <property type="entry name" value="GH10609P-RELATED"/>
    <property type="match status" value="1"/>
</dbReference>
<dbReference type="PANTHER" id="PTHR10009">
    <property type="entry name" value="PROTEIN YELLOW-RELATED"/>
    <property type="match status" value="1"/>
</dbReference>
<dbReference type="Pfam" id="PF03022">
    <property type="entry name" value="MRJP"/>
    <property type="match status" value="1"/>
</dbReference>
<dbReference type="PRINTS" id="PR01366">
    <property type="entry name" value="ROYALJELLY"/>
</dbReference>
<dbReference type="SUPFAM" id="SSF101898">
    <property type="entry name" value="NHL repeat"/>
    <property type="match status" value="1"/>
</dbReference>
<feature type="signal peptide" evidence="1 2 21">
    <location>
        <begin position="1"/>
        <end position="19"/>
    </location>
</feature>
<feature type="chain" id="PRO_0000031043" description="Major royal jelly protein 1" evidence="2 37 38">
    <location>
        <begin position="20"/>
        <end position="432"/>
    </location>
</feature>
<feature type="peptide" id="PRO_0000224649" description="Jellein-2" evidence="3">
    <location>
        <begin position="424"/>
        <end position="432"/>
    </location>
</feature>
<feature type="peptide" id="PRO_0000224650" description="Jellein-4" evidence="3">
    <location>
        <begin position="424"/>
        <end position="431"/>
    </location>
</feature>
<feature type="peptide" id="PRO_0000224648" description="Jellein-1" evidence="3">
    <location>
        <begin position="425"/>
        <end position="432"/>
    </location>
</feature>
<feature type="binding site" evidence="13 40">
    <location>
        <position position="364"/>
    </location>
    <ligand>
        <name>24-methylenecholesterol</name>
        <dbReference type="ChEBI" id="CHEBI:19812"/>
    </ligand>
</feature>
<feature type="modified residue" description="Histidine amide; atypical" evidence="3">
    <location>
        <position position="431"/>
    </location>
</feature>
<feature type="modified residue" description="Leucine amide; atypical" evidence="3">
    <location>
        <position position="432"/>
    </location>
</feature>
<feature type="glycosylation site" description="N-linked (GlcNAc...) asparagine" evidence="17 41">
    <location>
        <position position="28"/>
    </location>
</feature>
<feature type="glycosylation site" description="N-linked (GlcNAc...) asparagine" evidence="13 17 40 41">
    <location>
        <position position="144"/>
    </location>
</feature>
<feature type="glycosylation site" description="N-linked (GlcNAc...) asparagine" evidence="17 41">
    <location>
        <position position="177"/>
    </location>
</feature>
<feature type="disulfide bond" evidence="13 17 40 41">
    <location>
        <begin position="118"/>
        <end position="150"/>
    </location>
</feature>
<feature type="disulfide bond" evidence="13 17 40 41">
    <location>
        <begin position="132"/>
        <end position="195"/>
    </location>
</feature>
<feature type="disulfide bond" evidence="13 17 40 41">
    <location>
        <begin position="329"/>
        <end position="416"/>
    </location>
</feature>
<feature type="sequence conflict" description="In Ref. 7; AA sequence." evidence="32" ref="7">
    <original>N</original>
    <variation>L</variation>
    <location>
        <position position="28"/>
    </location>
</feature>
<feature type="sequence conflict" description="In Ref. 7; AA sequence." evidence="32" ref="7">
    <original>S</original>
    <variation>K</variation>
    <location>
        <position position="30"/>
    </location>
</feature>
<feature type="strand" evidence="42">
    <location>
        <begin position="33"/>
        <end position="39"/>
    </location>
</feature>
<feature type="helix" evidence="42">
    <location>
        <begin position="47"/>
        <end position="56"/>
    </location>
</feature>
<feature type="helix" evidence="42">
    <location>
        <begin position="61"/>
        <end position="63"/>
    </location>
</feature>
<feature type="strand" evidence="42">
    <location>
        <begin position="65"/>
        <end position="72"/>
    </location>
</feature>
<feature type="strand" evidence="42">
    <location>
        <begin position="75"/>
        <end position="81"/>
    </location>
</feature>
<feature type="strand" evidence="42">
    <location>
        <begin position="89"/>
        <end position="97"/>
    </location>
</feature>
<feature type="strand" evidence="42">
    <location>
        <begin position="99"/>
        <end position="108"/>
    </location>
</feature>
<feature type="helix" evidence="42">
    <location>
        <begin position="110"/>
        <end position="113"/>
    </location>
</feature>
<feature type="strand" evidence="42">
    <location>
        <begin position="124"/>
        <end position="129"/>
    </location>
</feature>
<feature type="strand" evidence="42">
    <location>
        <begin position="133"/>
        <end position="139"/>
    </location>
</feature>
<feature type="turn" evidence="42">
    <location>
        <begin position="144"/>
        <end position="146"/>
    </location>
</feature>
<feature type="strand" evidence="42">
    <location>
        <begin position="153"/>
        <end position="158"/>
    </location>
</feature>
<feature type="turn" evidence="42">
    <location>
        <begin position="159"/>
        <end position="162"/>
    </location>
</feature>
<feature type="strand" evidence="42">
    <location>
        <begin position="163"/>
        <end position="169"/>
    </location>
</feature>
<feature type="helix" evidence="42">
    <location>
        <begin position="172"/>
        <end position="175"/>
    </location>
</feature>
<feature type="turn" evidence="42">
    <location>
        <begin position="178"/>
        <end position="180"/>
    </location>
</feature>
<feature type="strand" evidence="42">
    <location>
        <begin position="185"/>
        <end position="194"/>
    </location>
</feature>
<feature type="strand" evidence="42">
    <location>
        <begin position="201"/>
        <end position="207"/>
    </location>
</feature>
<feature type="turn" evidence="42">
    <location>
        <begin position="208"/>
        <end position="211"/>
    </location>
</feature>
<feature type="strand" evidence="42">
    <location>
        <begin position="212"/>
        <end position="217"/>
    </location>
</feature>
<feature type="turn" evidence="42">
    <location>
        <begin position="218"/>
        <end position="220"/>
    </location>
</feature>
<feature type="helix" evidence="42">
    <location>
        <begin position="229"/>
        <end position="231"/>
    </location>
</feature>
<feature type="helix" evidence="42">
    <location>
        <begin position="235"/>
        <end position="237"/>
    </location>
</feature>
<feature type="strand" evidence="42">
    <location>
        <begin position="239"/>
        <end position="242"/>
    </location>
</feature>
<feature type="strand" evidence="42">
    <location>
        <begin position="245"/>
        <end position="248"/>
    </location>
</feature>
<feature type="strand" evidence="42">
    <location>
        <begin position="253"/>
        <end position="258"/>
    </location>
</feature>
<feature type="turn" evidence="42">
    <location>
        <begin position="260"/>
        <end position="262"/>
    </location>
</feature>
<feature type="strand" evidence="42">
    <location>
        <begin position="264"/>
        <end position="271"/>
    </location>
</feature>
<feature type="strand" evidence="42">
    <location>
        <begin position="275"/>
        <end position="280"/>
    </location>
</feature>
<feature type="helix" evidence="42">
    <location>
        <begin position="281"/>
        <end position="284"/>
    </location>
</feature>
<feature type="strand" evidence="42">
    <location>
        <begin position="295"/>
        <end position="300"/>
    </location>
</feature>
<feature type="strand" evidence="42">
    <location>
        <begin position="302"/>
        <end position="304"/>
    </location>
</feature>
<feature type="strand" evidence="42">
    <location>
        <begin position="306"/>
        <end position="311"/>
    </location>
</feature>
<feature type="strand" evidence="42">
    <location>
        <begin position="315"/>
        <end position="321"/>
    </location>
</feature>
<feature type="turn" evidence="42">
    <location>
        <begin position="322"/>
        <end position="325"/>
    </location>
</feature>
<feature type="strand" evidence="42">
    <location>
        <begin position="326"/>
        <end position="331"/>
    </location>
</feature>
<feature type="helix" evidence="42">
    <location>
        <begin position="338"/>
        <end position="340"/>
    </location>
</feature>
<feature type="strand" evidence="42">
    <location>
        <begin position="342"/>
        <end position="346"/>
    </location>
</feature>
<feature type="turn" evidence="42">
    <location>
        <begin position="348"/>
        <end position="350"/>
    </location>
</feature>
<feature type="strand" evidence="42">
    <location>
        <begin position="352"/>
        <end position="361"/>
    </location>
</feature>
<feature type="helix" evidence="42">
    <location>
        <begin position="367"/>
        <end position="372"/>
    </location>
</feature>
<feature type="strand" evidence="42">
    <location>
        <begin position="376"/>
        <end position="383"/>
    </location>
</feature>
<feature type="helix" evidence="42">
    <location>
        <begin position="385"/>
        <end position="389"/>
    </location>
</feature>
<feature type="strand" evidence="42">
    <location>
        <begin position="400"/>
        <end position="406"/>
    </location>
</feature>
<feature type="helix" evidence="42">
    <location>
        <begin position="407"/>
        <end position="411"/>
    </location>
</feature>
<feature type="strand" evidence="42">
    <location>
        <begin position="424"/>
        <end position="430"/>
    </location>
</feature>
<name>MRJP1_APIME</name>
<reference key="1">
    <citation type="journal article" date="1997" name="Eur. J. Biochem.">
        <title>Change in the mode of gene expression of the hypopharyngeal gland cells with an age-dependent role change of the worker honeybee Apis mellifera L.</title>
        <authorList>
            <person name="Ohashi K."/>
            <person name="Natori S."/>
            <person name="Kubo T."/>
        </authorList>
    </citation>
    <scope>NUCLEOTIDE SEQUENCE [MRNA]</scope>
    <scope>PROTEIN SEQUENCE OF 39-48; 63-71 AND 361-380</scope>
    <scope>FUNCTION</scope>
    <scope>SUBCELLULAR LOCATION</scope>
    <scope>TISSUE SPECIFICITY</scope>
    <scope>DEVELOPMENTAL STAGE</scope>
    <scope>GLYCOSYLATION</scope>
    <source>
        <tissue>Hypopharyngeal gland</tissue>
    </source>
</reference>
<reference key="2">
    <citation type="journal article" date="1998" name="Cell. Mol. Life Sci.">
        <title>A family of major royal jelly proteins of the honeybee Apis mellifera L.</title>
        <authorList>
            <person name="Schmitzova J."/>
            <person name="Klaudiny J."/>
            <person name="Albert S."/>
            <person name="Schroeder W."/>
            <person name="Schreckengost W."/>
            <person name="Hanes J."/>
            <person name="Judova J."/>
            <person name="Simuth J."/>
        </authorList>
    </citation>
    <scope>NUCLEOTIDE SEQUENCE [MRNA]</scope>
    <scope>PROTEIN SEQUENCE OF 20-30</scope>
    <scope>FUNCTION</scope>
    <source>
        <tissue>Head</tissue>
    </source>
</reference>
<reference key="3">
    <citation type="journal article" date="2003" name="Gene">
        <title>Honeybee (Apis mellifera L.) mrjp gene family: computational analysis of putative promoters and genomic structure of mrjp1, the gene coding for the most abundant protein of larval food.</title>
        <authorList>
            <person name="Malecova B."/>
            <person name="Ramser J."/>
            <person name="O'Brien J.K."/>
            <person name="Janitz M."/>
            <person name="Judova J."/>
            <person name="Lehrach H."/>
            <person name="Simuth J."/>
        </authorList>
    </citation>
    <scope>NUCLEOTIDE SEQUENCE [GENOMIC DNA]</scope>
</reference>
<reference key="4">
    <citation type="journal article" date="2004" name="J. Insect Physiol.">
        <title>The MRJP/YELLOW protein family of Apis mellifera: identification of new members in the EST library.</title>
        <authorList>
            <person name="Albert S."/>
            <person name="Klaudiny J."/>
        </authorList>
    </citation>
    <scope>NUCLEOTIDE SEQUENCE [MRNA]</scope>
</reference>
<reference key="5">
    <citation type="submission" date="2009-05" db="EMBL/GenBank/DDBJ databases">
        <title>Cloning, expression and monoclonal antibody generation of major royal jelly protein 1 (MJRP1) from Apis mellifera.</title>
        <authorList>
            <person name="Yoon B.S."/>
            <person name="Nguyen K.T."/>
        </authorList>
    </citation>
    <scope>NUCLEOTIDE SEQUENCE [MRNA]</scope>
</reference>
<reference key="6">
    <citation type="journal article" date="2014" name="BMC Genomics">
        <title>Finding the missing honey bee genes: lessons learned from a genome upgrade.</title>
        <authorList>
            <consortium name="HGSC production teams"/>
            <consortium name="Honey Bee Genome Sequencing Consortium"/>
            <person name="Elsik C.G."/>
            <person name="Worley K.C."/>
            <person name="Bennett A.K."/>
            <person name="Beye M."/>
            <person name="Camara F."/>
            <person name="Childers C.P."/>
            <person name="de Graaf D.C."/>
            <person name="Debyser G."/>
            <person name="Deng J."/>
            <person name="Devreese B."/>
            <person name="Elhaik E."/>
            <person name="Evans J.D."/>
            <person name="Foster L.J."/>
            <person name="Graur D."/>
            <person name="Guigo R."/>
            <person name="Hoff K.J."/>
            <person name="Holder M.E."/>
            <person name="Hudson M.E."/>
            <person name="Hunt G.J."/>
            <person name="Jiang H."/>
            <person name="Joshi V."/>
            <person name="Khetani R.S."/>
            <person name="Kosarev P."/>
            <person name="Kovar C.L."/>
            <person name="Ma J."/>
            <person name="Maleszka R."/>
            <person name="Moritz R.F."/>
            <person name="Munoz-Torres M.C."/>
            <person name="Murphy T.D."/>
            <person name="Muzny D.M."/>
            <person name="Newsham I.F."/>
            <person name="Reese J.T."/>
            <person name="Robertson H.M."/>
            <person name="Robinson G.E."/>
            <person name="Rueppell O."/>
            <person name="Solovyev V."/>
            <person name="Stanke M."/>
            <person name="Stolle E."/>
            <person name="Tsuruda J.M."/>
            <person name="Vaerenbergh M.V."/>
            <person name="Waterhouse R.M."/>
            <person name="Weaver D.B."/>
            <person name="Whitfield C.W."/>
            <person name="Wu Y."/>
            <person name="Zdobnov E.M."/>
            <person name="Zhang L."/>
            <person name="Zhu D."/>
            <person name="Gibbs R.A."/>
        </authorList>
    </citation>
    <scope>NUCLEOTIDE SEQUENCE [LARGE SCALE GENOMIC DNA]</scope>
</reference>
<reference key="7">
    <citation type="journal article" date="2001" name="Biosci. Biotechnol. Biochem.">
        <title>Storage-dependent degradation of 57-kDa protein in royal jelly: a possible marker for freshness.</title>
        <authorList>
            <person name="Kamakura M."/>
            <person name="Fukuda T."/>
            <person name="Fukushima M."/>
            <person name="Yonekura M."/>
        </authorList>
    </citation>
    <scope>PROTEIN SEQUENCE OF 20-34</scope>
</reference>
<reference key="8">
    <citation type="journal article" date="2004" name="J. Agric. Food Chem.">
        <title>Characterization of royal jelly proteins in both Africanized and European honeybees (Apis mellifera) by two-dimensional gel electrophoresis.</title>
        <authorList>
            <person name="Sano O."/>
            <person name="Kunikata T."/>
            <person name="Kohno K."/>
            <person name="Iwaki K."/>
            <person name="Ikeda M."/>
            <person name="Kurimoto M."/>
        </authorList>
    </citation>
    <scope>PROTEIN SEQUENCE OF 20-30</scope>
    <scope>SUBCELLULAR LOCATION</scope>
</reference>
<reference key="9">
    <citation type="journal article" date="2004" name="Peptides">
        <title>Jelleines: a family of antimicrobial peptides from the royal jelly of honeybees (Apis mellifera).</title>
        <authorList>
            <person name="Fontana R."/>
            <person name="Mendes M.A."/>
            <person name="de Souza B.M."/>
            <person name="Konno K."/>
            <person name="Cesar L.M."/>
            <person name="Malaspina O."/>
            <person name="Palma M.S."/>
        </authorList>
    </citation>
    <scope>PROTEIN SEQUENCE OF 424-432</scope>
    <scope>FUNCTION</scope>
    <scope>SUBCELLULAR LOCATION</scope>
    <scope>TISSUE SPECIFICITY</scope>
    <scope>MASS SPECTROMETRY</scope>
    <scope>AMIDATION AT HIS-431 AND LEU-432</scope>
</reference>
<reference key="10">
    <citation type="journal article" date="1998" name="Naturwissenschaften">
        <title>A royal jelly protein is expressed in a subset of Kenyon cells in the mushroom bodies of the honey bee brain.</title>
        <authorList>
            <person name="Kucharski R."/>
            <person name="Maleszka R."/>
            <person name="Hayward D.C."/>
            <person name="Ball E.E."/>
        </authorList>
    </citation>
    <scope>TISSUE SPECIFICITY</scope>
    <scope>DEVELOPMENTAL STAGE</scope>
</reference>
<reference key="11">
    <citation type="journal article" date="2001" name="Apidologie">
        <title>Some properties of the main protein of honeybee (Apis mellifera) royal jelly.</title>
        <authorList>
            <person name="Simuth J."/>
        </authorList>
    </citation>
    <scope>SUBUNIT</scope>
</reference>
<reference key="12">
    <citation type="journal article" date="2005" name="Insect Biochem. Mol. Biol.">
        <title>Profiling the proteome complement of the secretion from hypopharyngeal gland of Africanized nurse-honeybees (Apis mellifera L.).</title>
        <authorList>
            <person name="Santos K.S."/>
            <person name="dos Santos L.D."/>
            <person name="Mendes M.A."/>
            <person name="de Souza B.M."/>
            <person name="Malaspina O."/>
            <person name="Palma M.S."/>
        </authorList>
    </citation>
    <scope>FUNCTION</scope>
    <scope>SUBCELLULAR LOCATION</scope>
    <scope>TISSUE SPECIFICITY</scope>
</reference>
<reference key="13">
    <citation type="journal article" date="2005" name="Proteomics">
        <title>Towards royal jelly proteome.</title>
        <authorList>
            <person name="Scarselli R."/>
            <person name="Donadio E."/>
            <person name="Giuffrida M.G."/>
            <person name="Fortunato D."/>
            <person name="Conti A."/>
            <person name="Balestreri E."/>
            <person name="Felicioli R."/>
            <person name="Pinzauti M."/>
            <person name="Sabatini A.G."/>
            <person name="Felicioli A."/>
        </authorList>
    </citation>
    <scope>SUBCELLULAR LOCATION</scope>
</reference>
<reference key="14">
    <citation type="journal article" date="2006" name="Genome Res.">
        <title>Evolution of the Yellow/Major Royal Jelly Protein family and the emergence of social behavior in honey bees.</title>
        <authorList>
            <person name="Drapeau M.D."/>
            <person name="Albert S."/>
            <person name="Kucharski R."/>
            <person name="Prusko C."/>
            <person name="Maleszka R."/>
        </authorList>
    </citation>
    <scope>IDENTIFICATION</scope>
    <scope>TISSUE SPECIFICITY</scope>
    <scope>DEVELOPMENTAL STAGE</scope>
</reference>
<reference key="15">
    <citation type="journal article" date="2006" name="Protein Expr. Purif.">
        <title>A hypopharyngeal gland protein of the worker honeybee Apis mellifera L. enhances proliferation of primary-cultured rat hepatocytes and suppresses apoptosis in the absence of serum.</title>
        <authorList>
            <person name="Kamakura M."/>
            <person name="Sakaki T."/>
        </authorList>
    </citation>
    <scope>IDENTIFICATION</scope>
</reference>
<reference key="16">
    <citation type="journal article" date="2009" name="J. Proteome Res.">
        <title>Proteomic analysis of honey bee brain upon ontogenetic and behavioral development.</title>
        <authorList>
            <person name="Garcia L."/>
            <person name="Saraiva Garcia C.H."/>
            <person name="Calabria L.K."/>
            <person name="Costa Nunes da Cruz G."/>
            <person name="Sanchez Puentes A."/>
            <person name="Bao S.N."/>
            <person name="Fontes W."/>
            <person name="Ricart C.A."/>
            <person name="Salmen Espindola F."/>
            <person name="Valle de Sousa M."/>
        </authorList>
    </citation>
    <scope>SUBCELLULAR LOCATION</scope>
    <scope>TISSUE SPECIFICITY</scope>
    <scope>DEVELOPMENTAL STAGE</scope>
    <scope>MASS SPECTROMETRY</scope>
    <scope>IDENTIFICATION BY MASS SPECTROMETRY</scope>
</reference>
<reference key="17">
    <citation type="journal article" date="2009" name="Proteomics">
        <title>Molecular characteristics and physiological functions of major royal jelly protein 1 oligomer.</title>
        <authorList>
            <person name="Tamura S."/>
            <person name="Amano S."/>
            <person name="Kono T."/>
            <person name="Kondoh J."/>
            <person name="Yamaguchi K."/>
            <person name="Kobayashi S."/>
            <person name="Ayabe T."/>
            <person name="Moriyama T."/>
        </authorList>
    </citation>
    <scope>FUNCTION</scope>
    <scope>IDENTIFICATION IN APISIN COMPLEX</scope>
    <scope>SUBCELLULAR LOCATION</scope>
</reference>
<reference key="18">
    <citation type="journal article" date="2011" name="Nature">
        <title>Royalactin induces queen differentiation in honeybees.</title>
        <authorList>
            <person name="Kamakura M."/>
        </authorList>
    </citation>
    <scope>FUNCTION</scope>
</reference>
<reference key="19">
    <citation type="journal article" date="2016" name="Evid. Based Complement Alternat. Med.">
        <title>Quantitative analysis of apisin, a major protein unique to royal jelly.</title>
        <authorList>
            <person name="Furusawa T."/>
            <person name="Arai Y."/>
            <person name="Kato K."/>
            <person name="Ichihara K."/>
        </authorList>
    </citation>
    <scope>SUBUNIT</scope>
</reference>
<reference key="20">
    <citation type="journal article" date="2017" name="Biochemistry">
        <title>Characterizing the Structure and Oligomerization of Major Royal Jelly Protein 1 (MRJP1) by Mass Spectrometry and Complementary Biophysical Tools.</title>
        <authorList>
            <person name="Mandacaru S.C."/>
            <person name="do Vale L.H."/>
            <person name="Vahidi S."/>
            <person name="Xiao Y."/>
            <person name="Skinner O.S."/>
            <person name="Ricart C.A."/>
            <person name="Kelleher N.L."/>
            <person name="de Sousa M.V."/>
            <person name="Konermann L."/>
        </authorList>
    </citation>
    <scope>SUBUNIT</scope>
    <scope>GLYCOSYLATION</scope>
    <scope>IDENTIFICATION BY MASS SPECTROMETRY</scope>
</reference>
<reference key="21">
    <citation type="journal article" date="2018" name="Curr. Biol.">
        <title>How Honeybees Defy Gravity with Royal Jelly to Raise Queens.</title>
        <authorList>
            <person name="Buttstedt A."/>
            <person name="Muresan C.I."/>
            <person name="Lilie H."/>
            <person name="Hause G."/>
            <person name="Ihling C.H."/>
            <person name="Schulze S.H."/>
            <person name="Pietzsch M."/>
            <person name="Moritz R.F.A."/>
        </authorList>
    </citation>
    <scope>FUNCTION</scope>
    <scope>INTERACTION WITH APISIMIN</scope>
    <scope>IDENTIFICATION BY MASS SPECTROMETRY</scope>
</reference>
<reference key="22">
    <citation type="journal article" date="2018" name="Insects">
        <title>Transcriptional Control of Honey Bee (Apis mellifera) Major Royal Jelly Proteins by 20-Hydroxyecdysone.</title>
        <authorList>
            <person name="Winkler P."/>
            <person name="Sieg F."/>
            <person name="Buttstedt A."/>
        </authorList>
    </citation>
    <scope>INDUCTION BY 20-HYDROXYECDYSONE</scope>
</reference>
<reference key="23">
    <citation type="journal article" date="2019" name="Ecol. Evol.">
        <title>The rise and fall of major royal jelly proteins during a honeybee (Apis mellifera) workers' life.</title>
        <authorList>
            <person name="Dobritzsch D."/>
            <person name="Aumer D."/>
            <person name="Fuszard M."/>
            <person name="Erler S."/>
            <person name="Buttstedt A."/>
        </authorList>
    </citation>
    <scope>FUNCTION</scope>
    <scope>SUBCELLULAR LOCATION</scope>
    <scope>TISSUE SPECIFICITY</scope>
    <scope>DEVELOPMENTAL STAGE</scope>
    <scope>IDENTIFICATION BY MASS SPECTROMETRY</scope>
</reference>
<reference key="24">
    <citation type="journal article" date="2019" name="Sci. Rep.">
        <title>pH-dependent stability of honey bee (Apis mellifera) major royal jelly proteins.</title>
        <authorList>
            <person name="Muresan C.I."/>
            <person name="Buttstedt A."/>
        </authorList>
    </citation>
    <scope>BIOPHYSICOCHEMICAL PROPERTIES</scope>
</reference>
<reference key="25">
    <citation type="journal article" date="2021" name="Insects">
        <title>Upregulation of Transferrin and Major Royal Jelly Proteins in the Spermathecal Fluid of Mated Honeybee (Apis mellifera) Queens.</title>
        <authorList>
            <person name="Park H.G."/>
            <person name="Kim B.Y."/>
            <person name="Kim J.M."/>
            <person name="Choi Y.S."/>
            <person name="Yoon H.J."/>
            <person name="Lee K.S."/>
            <person name="Jin B.R."/>
        </authorList>
    </citation>
    <scope>FUNCTION</scope>
    <scope>TISSUE SPECIFICITY</scope>
</reference>
<reference evidence="40" key="26">
    <citation type="journal article" date="2018" name="Nat. Commun.">
        <title>Architecture of the native major royal jelly protein 1 oligomer.</title>
        <authorList>
            <person name="Tian W."/>
            <person name="Li M."/>
            <person name="Guo H."/>
            <person name="Peng W."/>
            <person name="Xue X."/>
            <person name="Hu Y."/>
            <person name="Liu Y."/>
            <person name="Zhao Y."/>
            <person name="Fang X."/>
            <person name="Wang K."/>
            <person name="Li X."/>
            <person name="Tong Y."/>
            <person name="Conlon M.A."/>
            <person name="Wu W."/>
            <person name="Ren F."/>
            <person name="Chen Z."/>
        </authorList>
    </citation>
    <scope>X-RAY CRYSTALLOGRAPHY (2.65 ANGSTROMS) IN COMPLEX WITH APISIMIN AND 24-METHYLENECHOLESTEROL</scope>
    <scope>IDENTIFICATION IN THE APISIN COMPLEX</scope>
    <scope>GLYCOSYLATION AT ASN-144</scope>
    <scope>DISULFIDE BONDS</scope>
    <scope>IDENTIFICATION BY MASS SPECTROMETRY</scope>
</reference>
<reference evidence="41" key="27">
    <citation type="journal article" date="2020" name="Nat. Commun.">
        <title>Structure of native glycolipoprotein filaments in honeybee royal jelly.</title>
        <authorList>
            <person name="Mattei S."/>
            <person name="Ban A."/>
            <person name="Picenoni A."/>
            <person name="Leibundgut M."/>
            <person name="Glockshuber R."/>
            <person name="Boehringer D."/>
        </authorList>
    </citation>
    <scope>STRUCTURE BY ELECTRON MICROSCOPY (3.50 ANGSTROMS) IN COMPLEX WITH APISIMIN AND 24-METHYLENECHOLESTEROL</scope>
    <scope>IDENTIFICATION IN THE APISIN COMPLEX</scope>
    <scope>GLYCOSYLATION AT ASN-28; ASN-144 AND ASN-177</scope>
    <scope>DISULFIDE BONDS</scope>
    <scope>IDENTIFICATION BY MASS SPECTROMETRY</scope>
</reference>
<proteinExistence type="evidence at protein level"/>
<protein>
    <recommendedName>
        <fullName evidence="31">Major royal jelly protein 1</fullName>
    </recommendedName>
    <alternativeName>
        <fullName evidence="29">56-kDa protein 4</fullName>
        <shortName evidence="29">p56kP-4</shortName>
    </alternativeName>
    <alternativeName>
        <fullName evidence="25">Apalbumin 1</fullName>
    </alternativeName>
    <alternativeName>
        <fullName evidence="28">Apisin subunit MRJP1</fullName>
    </alternativeName>
    <alternativeName>
        <fullName evidence="29">Bee-milk protein</fullName>
    </alternativeName>
    <alternativeName>
        <fullName evidence="32">Royal jelly protein RJP57-3</fullName>
        <shortName evidence="30">RJP-3</shortName>
    </alternativeName>
    <alternativeName>
        <fullName evidence="27">Royalactin</fullName>
    </alternativeName>
    <component>
        <recommendedName>
            <fullName evidence="32">Jellein-1</fullName>
        </recommendedName>
        <alternativeName>
            <fullName evidence="24">Jelleine-I</fullName>
        </alternativeName>
    </component>
    <component>
        <recommendedName>
            <fullName evidence="32">Jellein-2</fullName>
        </recommendedName>
        <alternativeName>
            <fullName evidence="24">Jelleine-II</fullName>
        </alternativeName>
    </component>
    <component>
        <recommendedName>
            <fullName evidence="32">Jellein-4</fullName>
        </recommendedName>
        <alternativeName>
            <fullName evidence="24">Jelleine-IV</fullName>
        </alternativeName>
    </component>
</protein>
<organism evidence="39">
    <name type="scientific">Apis mellifera</name>
    <name type="common">Honeybee</name>
    <dbReference type="NCBI Taxonomy" id="7460"/>
    <lineage>
        <taxon>Eukaryota</taxon>
        <taxon>Metazoa</taxon>
        <taxon>Ecdysozoa</taxon>
        <taxon>Arthropoda</taxon>
        <taxon>Hexapoda</taxon>
        <taxon>Insecta</taxon>
        <taxon>Pterygota</taxon>
        <taxon>Neoptera</taxon>
        <taxon>Endopterygota</taxon>
        <taxon>Hymenoptera</taxon>
        <taxon>Apocrita</taxon>
        <taxon>Aculeata</taxon>
        <taxon>Apoidea</taxon>
        <taxon>Anthophila</taxon>
        <taxon>Apidae</taxon>
        <taxon>Apis</taxon>
    </lineage>
</organism>
<sequence length="432" mass="48886">MTRLFMLVCLGIVCQGTTGNILRGESLNKSLPILHEWKFFDYDFGSDERRQDAILSGEYDYKNNYPSDIDQWHDKIFVTMLRYNGVPSSLNVISKKVGDGGPLLQPYPDWSFAKYDDCSGIVSASKLAIDKCDRLWVLDSGLVNNTQPMCSPKLLTFDLTTSQLLKQVEIPHDVAVNATTGKGRLSSLAVQSLDCNTNSDTMVYIADEKGEGLIVYHNSDDSFHRLTSNTFDYDPKFTKMTIDGESYTAQDGISGMALSPMTNNLYYSPVASTSLYYVNTEQFRTSDYQQNDIHYEGVQNILDTQSSAKVVSKSGVLFFGLVGDSALGCWNEHRTLERHNIRTVAQSDETLQMIASMKIKEALPHVPIFDRYINREYILVLSNKMQKMVNNDFNFDDVNFRIMNANVNELILNTRCENPDNDRTPFKISIHL</sequence>
<gene>
    <name evidence="23 26 31" type="primary">Mrjp1</name>
    <name evidence="26" type="synonym">GB14888</name>
</gene>